<gene>
    <name evidence="1" type="primary">tilS</name>
    <name type="ordered locus">SSA_0013</name>
</gene>
<evidence type="ECO:0000255" key="1">
    <source>
        <dbReference type="HAMAP-Rule" id="MF_01161"/>
    </source>
</evidence>
<organism>
    <name type="scientific">Streptococcus sanguinis (strain SK36)</name>
    <dbReference type="NCBI Taxonomy" id="388919"/>
    <lineage>
        <taxon>Bacteria</taxon>
        <taxon>Bacillati</taxon>
        <taxon>Bacillota</taxon>
        <taxon>Bacilli</taxon>
        <taxon>Lactobacillales</taxon>
        <taxon>Streptococcaceae</taxon>
        <taxon>Streptococcus</taxon>
    </lineage>
</organism>
<feature type="chain" id="PRO_1000065629" description="tRNA(Ile)-lysidine synthase">
    <location>
        <begin position="1"/>
        <end position="425"/>
    </location>
</feature>
<feature type="binding site" evidence="1">
    <location>
        <begin position="27"/>
        <end position="32"/>
    </location>
    <ligand>
        <name>ATP</name>
        <dbReference type="ChEBI" id="CHEBI:30616"/>
    </ligand>
</feature>
<sequence length="425" mass="49733">MIKQEFLKKMQEKKYFQDHRKVLIAVSGGLDSMTLLQLLIVSQKELAIELAIAHVNHKQRPESDQEEKALVKIAEQLGVKIFTSSFSGNFSENAARQFRYDFFGKVMQEGHYTALVTAHHADDQAETVFMRLLRGARLRHLSGMKAVQPFACGELIRPLLTFHKSDFPDIQHFEDSSNFQNDYLRNRIRNLYLPDLEKENPQFKDSLRYLGKEIEDWQTALSHLTRDLDIENVQVFHQQIPQVQRFLLQNYLENFSGLNLSKQQFEEVLNILQTKANYQHTLKKDYELVKDYQRFEIRKISRKPDLKMDSILLEFENLIEFGYYRFSFGIPLSGENIQKIFVSRETSLTLRFRKEGDSILLNGHHKKLRRLFIDKKVSFEERNSSVVVEQNHQILAILNIAISDLSKALKSDIMSTVLYIQKIDG</sequence>
<reference key="1">
    <citation type="journal article" date="2007" name="J. Bacteriol.">
        <title>Genome of the opportunistic pathogen Streptococcus sanguinis.</title>
        <authorList>
            <person name="Xu P."/>
            <person name="Alves J.M."/>
            <person name="Kitten T."/>
            <person name="Brown A."/>
            <person name="Chen Z."/>
            <person name="Ozaki L.S."/>
            <person name="Manque P."/>
            <person name="Ge X."/>
            <person name="Serrano M.G."/>
            <person name="Puiu D."/>
            <person name="Hendricks S."/>
            <person name="Wang Y."/>
            <person name="Chaplin M.D."/>
            <person name="Akan D."/>
            <person name="Paik S."/>
            <person name="Peterson D.L."/>
            <person name="Macrina F.L."/>
            <person name="Buck G.A."/>
        </authorList>
    </citation>
    <scope>NUCLEOTIDE SEQUENCE [LARGE SCALE GENOMIC DNA]</scope>
    <source>
        <strain>SK36</strain>
    </source>
</reference>
<proteinExistence type="inferred from homology"/>
<dbReference type="EC" id="6.3.4.19" evidence="1"/>
<dbReference type="EMBL" id="CP000387">
    <property type="protein sequence ID" value="ABN43482.1"/>
    <property type="molecule type" value="Genomic_DNA"/>
</dbReference>
<dbReference type="RefSeq" id="WP_011836281.1">
    <property type="nucleotide sequence ID" value="NC_009009.1"/>
</dbReference>
<dbReference type="RefSeq" id="YP_001034032.1">
    <property type="nucleotide sequence ID" value="NC_009009.1"/>
</dbReference>
<dbReference type="SMR" id="A3CJX7"/>
<dbReference type="STRING" id="388919.SSA_0013"/>
<dbReference type="KEGG" id="ssa:SSA_0013"/>
<dbReference type="PATRIC" id="fig|388919.9.peg.12"/>
<dbReference type="eggNOG" id="COG0037">
    <property type="taxonomic scope" value="Bacteria"/>
</dbReference>
<dbReference type="HOGENOM" id="CLU_018869_0_2_9"/>
<dbReference type="OrthoDB" id="9807403at2"/>
<dbReference type="Proteomes" id="UP000002148">
    <property type="component" value="Chromosome"/>
</dbReference>
<dbReference type="GO" id="GO:0005737">
    <property type="term" value="C:cytoplasm"/>
    <property type="evidence" value="ECO:0007669"/>
    <property type="project" value="UniProtKB-SubCell"/>
</dbReference>
<dbReference type="GO" id="GO:0005524">
    <property type="term" value="F:ATP binding"/>
    <property type="evidence" value="ECO:0007669"/>
    <property type="project" value="UniProtKB-UniRule"/>
</dbReference>
<dbReference type="GO" id="GO:0032267">
    <property type="term" value="F:tRNA(Ile)-lysidine synthase activity"/>
    <property type="evidence" value="ECO:0007669"/>
    <property type="project" value="UniProtKB-EC"/>
</dbReference>
<dbReference type="GO" id="GO:0006400">
    <property type="term" value="P:tRNA modification"/>
    <property type="evidence" value="ECO:0007669"/>
    <property type="project" value="UniProtKB-UniRule"/>
</dbReference>
<dbReference type="CDD" id="cd01992">
    <property type="entry name" value="TilS_N"/>
    <property type="match status" value="1"/>
</dbReference>
<dbReference type="Gene3D" id="3.40.50.620">
    <property type="entry name" value="HUPs"/>
    <property type="match status" value="1"/>
</dbReference>
<dbReference type="HAMAP" id="MF_01161">
    <property type="entry name" value="tRNA_Ile_lys_synt"/>
    <property type="match status" value="1"/>
</dbReference>
<dbReference type="InterPro" id="IPR012796">
    <property type="entry name" value="Lysidine-tRNA-synth_C"/>
</dbReference>
<dbReference type="InterPro" id="IPR014729">
    <property type="entry name" value="Rossmann-like_a/b/a_fold"/>
</dbReference>
<dbReference type="InterPro" id="IPR011063">
    <property type="entry name" value="TilS/TtcA_N"/>
</dbReference>
<dbReference type="InterPro" id="IPR012094">
    <property type="entry name" value="tRNA_Ile_lys_synt"/>
</dbReference>
<dbReference type="InterPro" id="IPR012795">
    <property type="entry name" value="tRNA_Ile_lys_synt_N"/>
</dbReference>
<dbReference type="NCBIfam" id="TIGR02433">
    <property type="entry name" value="lysidine_TilS_C"/>
    <property type="match status" value="1"/>
</dbReference>
<dbReference type="NCBIfam" id="TIGR02432">
    <property type="entry name" value="lysidine_TilS_N"/>
    <property type="match status" value="1"/>
</dbReference>
<dbReference type="PANTHER" id="PTHR43033">
    <property type="entry name" value="TRNA(ILE)-LYSIDINE SYNTHASE-RELATED"/>
    <property type="match status" value="1"/>
</dbReference>
<dbReference type="PANTHER" id="PTHR43033:SF1">
    <property type="entry name" value="TRNA(ILE)-LYSIDINE SYNTHASE-RELATED"/>
    <property type="match status" value="1"/>
</dbReference>
<dbReference type="Pfam" id="PF01171">
    <property type="entry name" value="ATP_bind_3"/>
    <property type="match status" value="1"/>
</dbReference>
<dbReference type="Pfam" id="PF11734">
    <property type="entry name" value="TilS_C"/>
    <property type="match status" value="1"/>
</dbReference>
<dbReference type="SMART" id="SM00977">
    <property type="entry name" value="TilS_C"/>
    <property type="match status" value="1"/>
</dbReference>
<dbReference type="SUPFAM" id="SSF52402">
    <property type="entry name" value="Adenine nucleotide alpha hydrolases-like"/>
    <property type="match status" value="1"/>
</dbReference>
<dbReference type="SUPFAM" id="SSF56037">
    <property type="entry name" value="PheT/TilS domain"/>
    <property type="match status" value="1"/>
</dbReference>
<name>TILS_STRSV</name>
<accession>A3CJX7</accession>
<comment type="function">
    <text evidence="1">Ligates lysine onto the cytidine present at position 34 of the AUA codon-specific tRNA(Ile) that contains the anticodon CAU, in an ATP-dependent manner. Cytidine is converted to lysidine, thus changing the amino acid specificity of the tRNA from methionine to isoleucine.</text>
</comment>
<comment type="catalytic activity">
    <reaction evidence="1">
        <text>cytidine(34) in tRNA(Ile2) + L-lysine + ATP = lysidine(34) in tRNA(Ile2) + AMP + diphosphate + H(+)</text>
        <dbReference type="Rhea" id="RHEA:43744"/>
        <dbReference type="Rhea" id="RHEA-COMP:10625"/>
        <dbReference type="Rhea" id="RHEA-COMP:10670"/>
        <dbReference type="ChEBI" id="CHEBI:15378"/>
        <dbReference type="ChEBI" id="CHEBI:30616"/>
        <dbReference type="ChEBI" id="CHEBI:32551"/>
        <dbReference type="ChEBI" id="CHEBI:33019"/>
        <dbReference type="ChEBI" id="CHEBI:82748"/>
        <dbReference type="ChEBI" id="CHEBI:83665"/>
        <dbReference type="ChEBI" id="CHEBI:456215"/>
        <dbReference type="EC" id="6.3.4.19"/>
    </reaction>
</comment>
<comment type="subcellular location">
    <subcellularLocation>
        <location evidence="1">Cytoplasm</location>
    </subcellularLocation>
</comment>
<comment type="domain">
    <text>The N-terminal region contains the highly conserved SGGXDS motif, predicted to be a P-loop motif involved in ATP binding.</text>
</comment>
<comment type="similarity">
    <text evidence="1">Belongs to the tRNA(Ile)-lysidine synthase family.</text>
</comment>
<protein>
    <recommendedName>
        <fullName evidence="1">tRNA(Ile)-lysidine synthase</fullName>
        <ecNumber evidence="1">6.3.4.19</ecNumber>
    </recommendedName>
    <alternativeName>
        <fullName evidence="1">tRNA(Ile)-2-lysyl-cytidine synthase</fullName>
    </alternativeName>
    <alternativeName>
        <fullName evidence="1">tRNA(Ile)-lysidine synthetase</fullName>
    </alternativeName>
</protein>
<keyword id="KW-0067">ATP-binding</keyword>
<keyword id="KW-0963">Cytoplasm</keyword>
<keyword id="KW-0436">Ligase</keyword>
<keyword id="KW-0547">Nucleotide-binding</keyword>
<keyword id="KW-1185">Reference proteome</keyword>
<keyword id="KW-0819">tRNA processing</keyword>